<sequence length="629" mass="70970">MMWRDALSLVEEEDPHMKVSLGSSDMGVSAHLQSSKTGTTRFFTSNTHSSVVLQGFDQLRVEGLLCDVTLVPGDGDEVFPVHRAMMASASDYFKAMFTGGMKEQDLMCIKLHGVNKIGLKKIIDFIYTAKLSLNMDNLQDTLEAASFLQILPVLDFCKVFLISGVSLENCVEVGRIANTYNLTEVDKYVNNFILKNFPALLSTGEFVKLPFERLAFVLSSNSLKHCTELELFKAACRWLRFEEPRMEYAAKLMKNIRFPLMTPQDLINYVQTVDFMRTDNTCVNLLLEASNYQMMPYMQPVMQSERTAIRSDSTHLVTLGGVLRQQLVVSKELRMYDEKAHEWKSLAPMDAPRYQHGIAVIGNFLYVVGGQSNYDTKGKTAVDTVFRFDPRYNKWMQVASLNEKRTFFHLSALKGHLYAVGGRNAAGELATVECYNPRMNEWSYVAKMNEPHYGHAGTVYGGLMYISGGITHDTFQKELMCFDPDTDKWTQKAPMTTVRGLHCMCTVGDKLYVIGGNHFRGTSDYDDVLSCEYYSTTLDQWTPIAAMLRGQSDVGVAVFENKIYVVGGYSWNNRCMVEIVQKYDPEKDEWHKVFDLPESLGGIRACTLTVFPPEDNTGSPSRESPLSAP</sequence>
<keyword id="KW-0131">Cell cycle</keyword>
<keyword id="KW-0132">Cell division</keyword>
<keyword id="KW-0880">Kelch repeat</keyword>
<keyword id="KW-0498">Mitosis</keyword>
<keyword id="KW-1185">Reference proteome</keyword>
<keyword id="KW-0677">Repeat</keyword>
<keyword id="KW-0833">Ubl conjugation pathway</keyword>
<accession>Q5ZLD3</accession>
<name>KLH13_CHICK</name>
<protein>
    <recommendedName>
        <fullName>Kelch-like protein 13</fullName>
    </recommendedName>
</protein>
<organism>
    <name type="scientific">Gallus gallus</name>
    <name type="common">Chicken</name>
    <dbReference type="NCBI Taxonomy" id="9031"/>
    <lineage>
        <taxon>Eukaryota</taxon>
        <taxon>Metazoa</taxon>
        <taxon>Chordata</taxon>
        <taxon>Craniata</taxon>
        <taxon>Vertebrata</taxon>
        <taxon>Euteleostomi</taxon>
        <taxon>Archelosauria</taxon>
        <taxon>Archosauria</taxon>
        <taxon>Dinosauria</taxon>
        <taxon>Saurischia</taxon>
        <taxon>Theropoda</taxon>
        <taxon>Coelurosauria</taxon>
        <taxon>Aves</taxon>
        <taxon>Neognathae</taxon>
        <taxon>Galloanserae</taxon>
        <taxon>Galliformes</taxon>
        <taxon>Phasianidae</taxon>
        <taxon>Phasianinae</taxon>
        <taxon>Gallus</taxon>
    </lineage>
</organism>
<evidence type="ECO:0000250" key="1"/>
<evidence type="ECO:0000255" key="2">
    <source>
        <dbReference type="PROSITE-ProRule" id="PRU00037"/>
    </source>
</evidence>
<comment type="function">
    <text evidence="1">Substrate-specific adapter of a BCR (BTB-CUL3-RBX1) E3 ubiquitin-protein ligase complex required for mitotic progression and cytokinesis. The BCR(KLHL9-KLHL13) E3 ubiquitin ligase complex mediates the ubiquitination of AURKB and controls the dynamic behavior of AURKB on mitotic chromosomes and thereby coordinates faithful mitotic progression and completion of cytokinesis (By similarity).</text>
</comment>
<comment type="pathway">
    <text>Protein modification; protein ubiquitination.</text>
</comment>
<comment type="subunit">
    <text evidence="1">Component of the BCR(KLHL9-KLHL13) E3 ubiquitin ligase complex, at least composed of CUL3, KLHL9, KLHL13 and RBX1. Interacts with AURKB (By similarity).</text>
</comment>
<gene>
    <name type="primary">KLHL13</name>
    <name type="ORF">RCJMB04_6k12</name>
</gene>
<reference key="1">
    <citation type="journal article" date="2005" name="Genome Biol.">
        <title>Full-length cDNAs from chicken bursal lymphocytes to facilitate gene function analysis.</title>
        <authorList>
            <person name="Caldwell R.B."/>
            <person name="Kierzek A.M."/>
            <person name="Arakawa H."/>
            <person name="Bezzubov Y."/>
            <person name="Zaim J."/>
            <person name="Fiedler P."/>
            <person name="Kutter S."/>
            <person name="Blagodatski A."/>
            <person name="Kostovska D."/>
            <person name="Koter M."/>
            <person name="Plachy J."/>
            <person name="Carninci P."/>
            <person name="Hayashizaki Y."/>
            <person name="Buerstedde J.-M."/>
        </authorList>
    </citation>
    <scope>NUCLEOTIDE SEQUENCE [LARGE SCALE MRNA]</scope>
    <source>
        <strain>CB</strain>
        <tissue>Bursa of Fabricius</tissue>
    </source>
</reference>
<proteinExistence type="evidence at transcript level"/>
<feature type="chain" id="PRO_0000378196" description="Kelch-like protein 13">
    <location>
        <begin position="1"/>
        <end position="629"/>
    </location>
</feature>
<feature type="domain" description="BTB" evidence="2">
    <location>
        <begin position="66"/>
        <end position="135"/>
    </location>
</feature>
<feature type="domain" description="BACK">
    <location>
        <begin position="170"/>
        <end position="271"/>
    </location>
</feature>
<feature type="repeat" description="Kelch 1">
    <location>
        <begin position="315"/>
        <end position="363"/>
    </location>
</feature>
<feature type="repeat" description="Kelch 2">
    <location>
        <begin position="364"/>
        <end position="415"/>
    </location>
</feature>
<feature type="repeat" description="Kelch 3">
    <location>
        <begin position="416"/>
        <end position="462"/>
    </location>
</feature>
<feature type="repeat" description="Kelch 4">
    <location>
        <begin position="464"/>
        <end position="509"/>
    </location>
</feature>
<feature type="repeat" description="Kelch 5">
    <location>
        <begin position="511"/>
        <end position="561"/>
    </location>
</feature>
<feature type="repeat" description="Kelch 6">
    <location>
        <begin position="562"/>
        <end position="610"/>
    </location>
</feature>
<dbReference type="EMBL" id="AJ719801">
    <property type="protein sequence ID" value="CAG31460.1"/>
    <property type="molecule type" value="mRNA"/>
</dbReference>
<dbReference type="RefSeq" id="NP_001026287.1">
    <property type="nucleotide sequence ID" value="NM_001031116.1"/>
</dbReference>
<dbReference type="RefSeq" id="XP_015133728.1">
    <property type="nucleotide sequence ID" value="XM_015278242.1"/>
</dbReference>
<dbReference type="SMR" id="Q5ZLD3"/>
<dbReference type="FunCoup" id="Q5ZLD3">
    <property type="interactions" value="826"/>
</dbReference>
<dbReference type="STRING" id="9031.ENSGALP00000069912"/>
<dbReference type="PaxDb" id="9031-ENSGALP00000009607"/>
<dbReference type="Ensembl" id="ENSGALT00010034829.1">
    <property type="protein sequence ID" value="ENSGALP00010020405.1"/>
    <property type="gene ID" value="ENSGALG00010014494.1"/>
</dbReference>
<dbReference type="GeneID" id="422226"/>
<dbReference type="KEGG" id="gga:422226"/>
<dbReference type="CTD" id="55958"/>
<dbReference type="VEuPathDB" id="HostDB:geneid_422226"/>
<dbReference type="eggNOG" id="KOG4441">
    <property type="taxonomic scope" value="Eukaryota"/>
</dbReference>
<dbReference type="GeneTree" id="ENSGT00940000154359"/>
<dbReference type="InParanoid" id="Q5ZLD3"/>
<dbReference type="OrthoDB" id="1925334at2759"/>
<dbReference type="PhylomeDB" id="Q5ZLD3"/>
<dbReference type="Reactome" id="R-GGA-8951664">
    <property type="pathway name" value="Neddylation"/>
</dbReference>
<dbReference type="Reactome" id="R-GGA-983168">
    <property type="pathway name" value="Antigen processing: Ubiquitination &amp; Proteasome degradation"/>
</dbReference>
<dbReference type="UniPathway" id="UPA00143"/>
<dbReference type="PRO" id="PR:Q5ZLD3"/>
<dbReference type="Proteomes" id="UP000000539">
    <property type="component" value="Chromosome 4"/>
</dbReference>
<dbReference type="Bgee" id="ENSGALG00000005982">
    <property type="expression patterns" value="Expressed in brain and 13 other cell types or tissues"/>
</dbReference>
<dbReference type="GO" id="GO:0031463">
    <property type="term" value="C:Cul3-RING ubiquitin ligase complex"/>
    <property type="evidence" value="ECO:0000250"/>
    <property type="project" value="UniProtKB"/>
</dbReference>
<dbReference type="GO" id="GO:0097602">
    <property type="term" value="F:cullin family protein binding"/>
    <property type="evidence" value="ECO:0000318"/>
    <property type="project" value="GO_Central"/>
</dbReference>
<dbReference type="GO" id="GO:0051301">
    <property type="term" value="P:cell division"/>
    <property type="evidence" value="ECO:0007669"/>
    <property type="project" value="UniProtKB-KW"/>
</dbReference>
<dbReference type="GO" id="GO:0016567">
    <property type="term" value="P:protein ubiquitination"/>
    <property type="evidence" value="ECO:0000250"/>
    <property type="project" value="UniProtKB"/>
</dbReference>
<dbReference type="GO" id="GO:0032465">
    <property type="term" value="P:regulation of cytokinesis"/>
    <property type="evidence" value="ECO:0000250"/>
    <property type="project" value="UniProtKB"/>
</dbReference>
<dbReference type="CDD" id="cd18449">
    <property type="entry name" value="BACK_KLHL9_13"/>
    <property type="match status" value="1"/>
</dbReference>
<dbReference type="CDD" id="cd18239">
    <property type="entry name" value="BTB_POZ_KLHL9_13"/>
    <property type="match status" value="1"/>
</dbReference>
<dbReference type="FunFam" id="1.25.40.420:FF:000002">
    <property type="entry name" value="Kelch-like family member 13"/>
    <property type="match status" value="1"/>
</dbReference>
<dbReference type="FunFam" id="2.120.10.80:FF:000001">
    <property type="entry name" value="Kelch-like family member 13"/>
    <property type="match status" value="1"/>
</dbReference>
<dbReference type="FunFam" id="3.30.710.10:FF:000011">
    <property type="entry name" value="Kelch-like family member 13"/>
    <property type="match status" value="1"/>
</dbReference>
<dbReference type="Gene3D" id="1.25.40.420">
    <property type="match status" value="1"/>
</dbReference>
<dbReference type="Gene3D" id="2.120.10.80">
    <property type="entry name" value="Kelch-type beta propeller"/>
    <property type="match status" value="1"/>
</dbReference>
<dbReference type="Gene3D" id="3.30.710.10">
    <property type="entry name" value="Potassium Channel Kv1.1, Chain A"/>
    <property type="match status" value="1"/>
</dbReference>
<dbReference type="InterPro" id="IPR011705">
    <property type="entry name" value="BACK"/>
</dbReference>
<dbReference type="InterPro" id="IPR017096">
    <property type="entry name" value="BTB-kelch_protein"/>
</dbReference>
<dbReference type="InterPro" id="IPR000210">
    <property type="entry name" value="BTB/POZ_dom"/>
</dbReference>
<dbReference type="InterPro" id="IPR015915">
    <property type="entry name" value="Kelch-typ_b-propeller"/>
</dbReference>
<dbReference type="InterPro" id="IPR006652">
    <property type="entry name" value="Kelch_1"/>
</dbReference>
<dbReference type="InterPro" id="IPR011333">
    <property type="entry name" value="SKP1/BTB/POZ_sf"/>
</dbReference>
<dbReference type="PANTHER" id="PTHR45632:SF11">
    <property type="entry name" value="KELCH-LIKE PROTEIN 9"/>
    <property type="match status" value="1"/>
</dbReference>
<dbReference type="PANTHER" id="PTHR45632">
    <property type="entry name" value="LD33804P"/>
    <property type="match status" value="1"/>
</dbReference>
<dbReference type="Pfam" id="PF07707">
    <property type="entry name" value="BACK"/>
    <property type="match status" value="1"/>
</dbReference>
<dbReference type="Pfam" id="PF00651">
    <property type="entry name" value="BTB"/>
    <property type="match status" value="1"/>
</dbReference>
<dbReference type="Pfam" id="PF01344">
    <property type="entry name" value="Kelch_1"/>
    <property type="match status" value="1"/>
</dbReference>
<dbReference type="Pfam" id="PF24681">
    <property type="entry name" value="Kelch_KLHDC2_KLHL20_DRC7"/>
    <property type="match status" value="1"/>
</dbReference>
<dbReference type="PIRSF" id="PIRSF037037">
    <property type="entry name" value="Kelch-like_protein_gigaxonin"/>
    <property type="match status" value="1"/>
</dbReference>
<dbReference type="SMART" id="SM00875">
    <property type="entry name" value="BACK"/>
    <property type="match status" value="1"/>
</dbReference>
<dbReference type="SMART" id="SM00225">
    <property type="entry name" value="BTB"/>
    <property type="match status" value="1"/>
</dbReference>
<dbReference type="SMART" id="SM00612">
    <property type="entry name" value="Kelch"/>
    <property type="match status" value="6"/>
</dbReference>
<dbReference type="SUPFAM" id="SSF117281">
    <property type="entry name" value="Kelch motif"/>
    <property type="match status" value="1"/>
</dbReference>
<dbReference type="SUPFAM" id="SSF54695">
    <property type="entry name" value="POZ domain"/>
    <property type="match status" value="1"/>
</dbReference>
<dbReference type="PROSITE" id="PS50097">
    <property type="entry name" value="BTB"/>
    <property type="match status" value="1"/>
</dbReference>